<organism>
    <name type="scientific">Synechococcus sp. (strain JA-2-3B'a(2-13))</name>
    <name type="common">Cyanobacteria bacterium Yellowstone B-Prime</name>
    <dbReference type="NCBI Taxonomy" id="321332"/>
    <lineage>
        <taxon>Bacteria</taxon>
        <taxon>Bacillati</taxon>
        <taxon>Cyanobacteriota</taxon>
        <taxon>Cyanophyceae</taxon>
        <taxon>Synechococcales</taxon>
        <taxon>Synechococcaceae</taxon>
        <taxon>Synechococcus</taxon>
    </lineage>
</organism>
<comment type="function">
    <text evidence="1">The RuvA-RuvB-RuvC complex processes Holliday junction (HJ) DNA during genetic recombination and DNA repair, while the RuvA-RuvB complex plays an important role in the rescue of blocked DNA replication forks via replication fork reversal (RFR). RuvA specifically binds to HJ cruciform DNA, conferring on it an open structure. The RuvB hexamer acts as an ATP-dependent pump, pulling dsDNA into and through the RuvAB complex. HJ branch migration allows RuvC to scan DNA until it finds its consensus sequence, where it cleaves and resolves the cruciform DNA.</text>
</comment>
<comment type="subunit">
    <text evidence="1">Homotetramer. Forms an RuvA(8)-RuvB(12)-Holliday junction (HJ) complex. HJ DNA is sandwiched between 2 RuvA tetramers; dsDNA enters through RuvA and exits via RuvB. An RuvB hexamer assembles on each DNA strand where it exits the tetramer. Each RuvB hexamer is contacted by two RuvA subunits (via domain III) on 2 adjacent RuvB subunits; this complex drives branch migration. In the full resolvosome a probable DNA-RuvA(4)-RuvB(12)-RuvC(2) complex forms which resolves the HJ.</text>
</comment>
<comment type="subcellular location">
    <subcellularLocation>
        <location evidence="1">Cytoplasm</location>
    </subcellularLocation>
</comment>
<comment type="domain">
    <text evidence="1">Has three domains with a flexible linker between the domains II and III and assumes an 'L' shape. Domain III is highly mobile and contacts RuvB.</text>
</comment>
<comment type="similarity">
    <text evidence="1">Belongs to the RuvA family.</text>
</comment>
<feature type="chain" id="PRO_1000002580" description="Holliday junction branch migration complex subunit RuvA">
    <location>
        <begin position="1"/>
        <end position="204"/>
    </location>
</feature>
<feature type="region of interest" description="Domain I" evidence="1">
    <location>
        <begin position="1"/>
        <end position="67"/>
    </location>
</feature>
<feature type="region of interest" description="Domain II" evidence="1">
    <location>
        <begin position="68"/>
        <end position="146"/>
    </location>
</feature>
<feature type="region of interest" description="Flexible linker" evidence="1">
    <location>
        <begin position="147"/>
        <end position="157"/>
    </location>
</feature>
<feature type="region of interest" description="Domain III" evidence="1">
    <location>
        <begin position="157"/>
        <end position="204"/>
    </location>
</feature>
<name>RUVA_SYNJB</name>
<evidence type="ECO:0000255" key="1">
    <source>
        <dbReference type="HAMAP-Rule" id="MF_00031"/>
    </source>
</evidence>
<protein>
    <recommendedName>
        <fullName evidence="1">Holliday junction branch migration complex subunit RuvA</fullName>
    </recommendedName>
</protein>
<sequence length="204" mass="22214">MIAFLSGHLVAIEWGERSSLTVEVQGIGYRVKAPGRFLKQLPAVGEPVRVFTHLVVRETELVLYGFGSPAERDLFVELIKVSGVGPALGLALLNTFGLPELVQAVVTENVRLLSLTPGVGHKTAQRLALELKTKLAHWRQGMGVADQPLAGGPPMPIREEVEMALLALGYSTQEIQAALQALPTHPRPTEDWLRDAITYLSQQP</sequence>
<accession>Q2JNW8</accession>
<reference key="1">
    <citation type="journal article" date="2007" name="ISME J.">
        <title>Population level functional diversity in a microbial community revealed by comparative genomic and metagenomic analyses.</title>
        <authorList>
            <person name="Bhaya D."/>
            <person name="Grossman A.R."/>
            <person name="Steunou A.-S."/>
            <person name="Khuri N."/>
            <person name="Cohan F.M."/>
            <person name="Hamamura N."/>
            <person name="Melendrez M.C."/>
            <person name="Bateson M.M."/>
            <person name="Ward D.M."/>
            <person name="Heidelberg J.F."/>
        </authorList>
    </citation>
    <scope>NUCLEOTIDE SEQUENCE [LARGE SCALE GENOMIC DNA]</scope>
    <source>
        <strain>JA-2-3B'a(2-13)</strain>
    </source>
</reference>
<dbReference type="EMBL" id="CP000240">
    <property type="protein sequence ID" value="ABD01537.1"/>
    <property type="molecule type" value="Genomic_DNA"/>
</dbReference>
<dbReference type="RefSeq" id="WP_011432196.1">
    <property type="nucleotide sequence ID" value="NC_007776.1"/>
</dbReference>
<dbReference type="SMR" id="Q2JNW8"/>
<dbReference type="STRING" id="321332.CYB_0546"/>
<dbReference type="KEGG" id="cyb:CYB_0546"/>
<dbReference type="eggNOG" id="COG0632">
    <property type="taxonomic scope" value="Bacteria"/>
</dbReference>
<dbReference type="HOGENOM" id="CLU_087936_0_0_3"/>
<dbReference type="OrthoDB" id="5293449at2"/>
<dbReference type="Proteomes" id="UP000001938">
    <property type="component" value="Chromosome"/>
</dbReference>
<dbReference type="GO" id="GO:0005737">
    <property type="term" value="C:cytoplasm"/>
    <property type="evidence" value="ECO:0007669"/>
    <property type="project" value="UniProtKB-SubCell"/>
</dbReference>
<dbReference type="GO" id="GO:0009379">
    <property type="term" value="C:Holliday junction helicase complex"/>
    <property type="evidence" value="ECO:0007669"/>
    <property type="project" value="InterPro"/>
</dbReference>
<dbReference type="GO" id="GO:0048476">
    <property type="term" value="C:Holliday junction resolvase complex"/>
    <property type="evidence" value="ECO:0007669"/>
    <property type="project" value="UniProtKB-UniRule"/>
</dbReference>
<dbReference type="GO" id="GO:0005524">
    <property type="term" value="F:ATP binding"/>
    <property type="evidence" value="ECO:0007669"/>
    <property type="project" value="InterPro"/>
</dbReference>
<dbReference type="GO" id="GO:0000400">
    <property type="term" value="F:four-way junction DNA binding"/>
    <property type="evidence" value="ECO:0007669"/>
    <property type="project" value="UniProtKB-UniRule"/>
</dbReference>
<dbReference type="GO" id="GO:0009378">
    <property type="term" value="F:four-way junction helicase activity"/>
    <property type="evidence" value="ECO:0007669"/>
    <property type="project" value="InterPro"/>
</dbReference>
<dbReference type="GO" id="GO:0006310">
    <property type="term" value="P:DNA recombination"/>
    <property type="evidence" value="ECO:0007669"/>
    <property type="project" value="UniProtKB-UniRule"/>
</dbReference>
<dbReference type="GO" id="GO:0006281">
    <property type="term" value="P:DNA repair"/>
    <property type="evidence" value="ECO:0007669"/>
    <property type="project" value="UniProtKB-UniRule"/>
</dbReference>
<dbReference type="CDD" id="cd14332">
    <property type="entry name" value="UBA_RuvA_C"/>
    <property type="match status" value="1"/>
</dbReference>
<dbReference type="Gene3D" id="1.10.150.20">
    <property type="entry name" value="5' to 3' exonuclease, C-terminal subdomain"/>
    <property type="match status" value="1"/>
</dbReference>
<dbReference type="Gene3D" id="2.40.50.140">
    <property type="entry name" value="Nucleic acid-binding proteins"/>
    <property type="match status" value="1"/>
</dbReference>
<dbReference type="HAMAP" id="MF_00031">
    <property type="entry name" value="DNA_HJ_migration_RuvA"/>
    <property type="match status" value="1"/>
</dbReference>
<dbReference type="InterPro" id="IPR013849">
    <property type="entry name" value="DNA_helicase_Holl-junc_RuvA_I"/>
</dbReference>
<dbReference type="InterPro" id="IPR012340">
    <property type="entry name" value="NA-bd_OB-fold"/>
</dbReference>
<dbReference type="InterPro" id="IPR000085">
    <property type="entry name" value="RuvA"/>
</dbReference>
<dbReference type="InterPro" id="IPR010994">
    <property type="entry name" value="RuvA_2-like"/>
</dbReference>
<dbReference type="InterPro" id="IPR011114">
    <property type="entry name" value="RuvA_C"/>
</dbReference>
<dbReference type="InterPro" id="IPR036267">
    <property type="entry name" value="RuvA_C_sf"/>
</dbReference>
<dbReference type="NCBIfam" id="TIGR00084">
    <property type="entry name" value="ruvA"/>
    <property type="match status" value="1"/>
</dbReference>
<dbReference type="Pfam" id="PF14520">
    <property type="entry name" value="HHH_5"/>
    <property type="match status" value="1"/>
</dbReference>
<dbReference type="Pfam" id="PF07499">
    <property type="entry name" value="RuvA_C"/>
    <property type="match status" value="1"/>
</dbReference>
<dbReference type="Pfam" id="PF01330">
    <property type="entry name" value="RuvA_N"/>
    <property type="match status" value="1"/>
</dbReference>
<dbReference type="SUPFAM" id="SSF46929">
    <property type="entry name" value="DNA helicase RuvA subunit, C-terminal domain"/>
    <property type="match status" value="1"/>
</dbReference>
<dbReference type="SUPFAM" id="SSF50249">
    <property type="entry name" value="Nucleic acid-binding proteins"/>
    <property type="match status" value="1"/>
</dbReference>
<dbReference type="SUPFAM" id="SSF47781">
    <property type="entry name" value="RuvA domain 2-like"/>
    <property type="match status" value="1"/>
</dbReference>
<proteinExistence type="inferred from homology"/>
<keyword id="KW-0963">Cytoplasm</keyword>
<keyword id="KW-0227">DNA damage</keyword>
<keyword id="KW-0233">DNA recombination</keyword>
<keyword id="KW-0234">DNA repair</keyword>
<keyword id="KW-0238">DNA-binding</keyword>
<keyword id="KW-1185">Reference proteome</keyword>
<gene>
    <name evidence="1" type="primary">ruvA</name>
    <name type="ordered locus">CYB_0546</name>
</gene>